<dbReference type="EC" id="5.3.1.1" evidence="1"/>
<dbReference type="EMBL" id="CP000768">
    <property type="protein sequence ID" value="ABS44309.1"/>
    <property type="molecule type" value="Genomic_DNA"/>
</dbReference>
<dbReference type="SMR" id="A7H5C4"/>
<dbReference type="KEGG" id="cjd:JJD26997_1735"/>
<dbReference type="HOGENOM" id="CLU_024251_2_3_7"/>
<dbReference type="UniPathway" id="UPA00109">
    <property type="reaction ID" value="UER00189"/>
</dbReference>
<dbReference type="UniPathway" id="UPA00138"/>
<dbReference type="Proteomes" id="UP000002302">
    <property type="component" value="Chromosome"/>
</dbReference>
<dbReference type="GO" id="GO:0005829">
    <property type="term" value="C:cytosol"/>
    <property type="evidence" value="ECO:0007669"/>
    <property type="project" value="TreeGrafter"/>
</dbReference>
<dbReference type="GO" id="GO:0004807">
    <property type="term" value="F:triose-phosphate isomerase activity"/>
    <property type="evidence" value="ECO:0007669"/>
    <property type="project" value="UniProtKB-UniRule"/>
</dbReference>
<dbReference type="GO" id="GO:0006094">
    <property type="term" value="P:gluconeogenesis"/>
    <property type="evidence" value="ECO:0007669"/>
    <property type="project" value="UniProtKB-UniRule"/>
</dbReference>
<dbReference type="GO" id="GO:0046166">
    <property type="term" value="P:glyceraldehyde-3-phosphate biosynthetic process"/>
    <property type="evidence" value="ECO:0007669"/>
    <property type="project" value="TreeGrafter"/>
</dbReference>
<dbReference type="GO" id="GO:0019563">
    <property type="term" value="P:glycerol catabolic process"/>
    <property type="evidence" value="ECO:0007669"/>
    <property type="project" value="TreeGrafter"/>
</dbReference>
<dbReference type="GO" id="GO:0006096">
    <property type="term" value="P:glycolytic process"/>
    <property type="evidence" value="ECO:0007669"/>
    <property type="project" value="UniProtKB-UniRule"/>
</dbReference>
<dbReference type="CDD" id="cd00311">
    <property type="entry name" value="TIM"/>
    <property type="match status" value="1"/>
</dbReference>
<dbReference type="Gene3D" id="3.20.20.70">
    <property type="entry name" value="Aldolase class I"/>
    <property type="match status" value="1"/>
</dbReference>
<dbReference type="HAMAP" id="MF_00147_B">
    <property type="entry name" value="TIM_B"/>
    <property type="match status" value="1"/>
</dbReference>
<dbReference type="InterPro" id="IPR013785">
    <property type="entry name" value="Aldolase_TIM"/>
</dbReference>
<dbReference type="InterPro" id="IPR035990">
    <property type="entry name" value="TIM_sf"/>
</dbReference>
<dbReference type="InterPro" id="IPR022896">
    <property type="entry name" value="TrioseP_Isoase_bac/euk"/>
</dbReference>
<dbReference type="InterPro" id="IPR000652">
    <property type="entry name" value="Triosephosphate_isomerase"/>
</dbReference>
<dbReference type="InterPro" id="IPR020861">
    <property type="entry name" value="Triosephosphate_isomerase_AS"/>
</dbReference>
<dbReference type="NCBIfam" id="NF000728">
    <property type="entry name" value="PRK00042.3-2"/>
    <property type="match status" value="1"/>
</dbReference>
<dbReference type="PANTHER" id="PTHR21139">
    <property type="entry name" value="TRIOSEPHOSPHATE ISOMERASE"/>
    <property type="match status" value="1"/>
</dbReference>
<dbReference type="PANTHER" id="PTHR21139:SF42">
    <property type="entry name" value="TRIOSEPHOSPHATE ISOMERASE"/>
    <property type="match status" value="1"/>
</dbReference>
<dbReference type="Pfam" id="PF00121">
    <property type="entry name" value="TIM"/>
    <property type="match status" value="1"/>
</dbReference>
<dbReference type="SUPFAM" id="SSF51351">
    <property type="entry name" value="Triosephosphate isomerase (TIM)"/>
    <property type="match status" value="1"/>
</dbReference>
<dbReference type="PROSITE" id="PS00171">
    <property type="entry name" value="TIM_1"/>
    <property type="match status" value="1"/>
</dbReference>
<dbReference type="PROSITE" id="PS51440">
    <property type="entry name" value="TIM_2"/>
    <property type="match status" value="1"/>
</dbReference>
<keyword id="KW-0963">Cytoplasm</keyword>
<keyword id="KW-0312">Gluconeogenesis</keyword>
<keyword id="KW-0324">Glycolysis</keyword>
<keyword id="KW-0413">Isomerase</keyword>
<gene>
    <name evidence="1" type="primary">tpiA</name>
    <name type="ordered locus">JJD26997_1735</name>
</gene>
<sequence>MIFAANLKCNHTRASFKIYAEILNKTMGAKCDDIIVFPPSVAFLENENNFMQGAQNFYPCVNGAFTGELGKEHLDEFGIKCVLIGHSERRALGDEELIKVKFNFAKEHGYKIIFCIGENLDTKNSGKTLEFLKKQLEIIDLNYEKLIIAYEPIYSIGTGVSAQTADIAKVLEFLASLTKVPLLYGGSVNENNIKEILSVNHCGGVLIGSAALKVENFIKLIKG</sequence>
<organism>
    <name type="scientific">Campylobacter jejuni subsp. doylei (strain ATCC BAA-1458 / RM4099 / 269.97)</name>
    <dbReference type="NCBI Taxonomy" id="360109"/>
    <lineage>
        <taxon>Bacteria</taxon>
        <taxon>Pseudomonadati</taxon>
        <taxon>Campylobacterota</taxon>
        <taxon>Epsilonproteobacteria</taxon>
        <taxon>Campylobacterales</taxon>
        <taxon>Campylobacteraceae</taxon>
        <taxon>Campylobacter</taxon>
    </lineage>
</organism>
<name>TPIS_CAMJD</name>
<evidence type="ECO:0000255" key="1">
    <source>
        <dbReference type="HAMAP-Rule" id="MF_00147"/>
    </source>
</evidence>
<proteinExistence type="inferred from homology"/>
<comment type="function">
    <text evidence="1">Involved in the gluconeogenesis. Catalyzes stereospecifically the conversion of dihydroxyacetone phosphate (DHAP) to D-glyceraldehyde-3-phosphate (G3P).</text>
</comment>
<comment type="catalytic activity">
    <reaction evidence="1">
        <text>D-glyceraldehyde 3-phosphate = dihydroxyacetone phosphate</text>
        <dbReference type="Rhea" id="RHEA:18585"/>
        <dbReference type="ChEBI" id="CHEBI:57642"/>
        <dbReference type="ChEBI" id="CHEBI:59776"/>
        <dbReference type="EC" id="5.3.1.1"/>
    </reaction>
</comment>
<comment type="pathway">
    <text evidence="1">Carbohydrate biosynthesis; gluconeogenesis.</text>
</comment>
<comment type="pathway">
    <text evidence="1">Carbohydrate degradation; glycolysis; D-glyceraldehyde 3-phosphate from glycerone phosphate: step 1/1.</text>
</comment>
<comment type="subunit">
    <text evidence="1">Homodimer.</text>
</comment>
<comment type="subcellular location">
    <subcellularLocation>
        <location evidence="1">Cytoplasm</location>
    </subcellularLocation>
</comment>
<comment type="similarity">
    <text evidence="1">Belongs to the triosephosphate isomerase family.</text>
</comment>
<protein>
    <recommendedName>
        <fullName evidence="1">Triosephosphate isomerase</fullName>
        <shortName evidence="1">TIM</shortName>
        <shortName evidence="1">TPI</shortName>
        <ecNumber evidence="1">5.3.1.1</ecNumber>
    </recommendedName>
    <alternativeName>
        <fullName evidence="1">Triose-phosphate isomerase</fullName>
    </alternativeName>
</protein>
<accession>A7H5C4</accession>
<reference key="1">
    <citation type="submission" date="2007-07" db="EMBL/GenBank/DDBJ databases">
        <title>Complete genome sequence of Campylobacter jejuni subsp doylei 269.97 isolated from human blood.</title>
        <authorList>
            <person name="Fouts D.E."/>
            <person name="Mongodin E.F."/>
            <person name="Puiu D."/>
            <person name="Sebastian Y."/>
            <person name="Miller W.G."/>
            <person name="Mandrell R.E."/>
            <person name="Lastovica A.J."/>
            <person name="Nelson K.E."/>
        </authorList>
    </citation>
    <scope>NUCLEOTIDE SEQUENCE [LARGE SCALE GENOMIC DNA]</scope>
    <source>
        <strain>ATCC BAA-1458 / RM4099 / 269.97</strain>
    </source>
</reference>
<feature type="chain" id="PRO_1000009843" description="Triosephosphate isomerase">
    <location>
        <begin position="1"/>
        <end position="223"/>
    </location>
</feature>
<feature type="active site" description="Electrophile" evidence="1">
    <location>
        <position position="86"/>
    </location>
</feature>
<feature type="active site" description="Proton acceptor" evidence="1">
    <location>
        <position position="151"/>
    </location>
</feature>
<feature type="binding site" evidence="1">
    <location>
        <begin position="6"/>
        <end position="8"/>
    </location>
    <ligand>
        <name>substrate</name>
    </ligand>
</feature>
<feature type="binding site" evidence="1">
    <location>
        <position position="157"/>
    </location>
    <ligand>
        <name>substrate</name>
    </ligand>
</feature>
<feature type="binding site" evidence="1">
    <location>
        <position position="187"/>
    </location>
    <ligand>
        <name>substrate</name>
    </ligand>
</feature>